<protein>
    <recommendedName>
        <fullName evidence="1">ATP-dependent protease subunit HslV</fullName>
        <ecNumber evidence="1">3.4.25.2</ecNumber>
    </recommendedName>
</protein>
<reference key="1">
    <citation type="submission" date="2006-02" db="EMBL/GenBank/DDBJ databases">
        <title>Complete sequence of chromosome of Rhodoferax ferrireducens DSM 15236.</title>
        <authorList>
            <person name="Copeland A."/>
            <person name="Lucas S."/>
            <person name="Lapidus A."/>
            <person name="Barry K."/>
            <person name="Detter J.C."/>
            <person name="Glavina del Rio T."/>
            <person name="Hammon N."/>
            <person name="Israni S."/>
            <person name="Pitluck S."/>
            <person name="Brettin T."/>
            <person name="Bruce D."/>
            <person name="Han C."/>
            <person name="Tapia R."/>
            <person name="Gilna P."/>
            <person name="Kiss H."/>
            <person name="Schmutz J."/>
            <person name="Larimer F."/>
            <person name="Land M."/>
            <person name="Kyrpides N."/>
            <person name="Ivanova N."/>
            <person name="Richardson P."/>
        </authorList>
    </citation>
    <scope>NUCLEOTIDE SEQUENCE [LARGE SCALE GENOMIC DNA]</scope>
    <source>
        <strain>ATCC BAA-621 / DSM 15236 / T118</strain>
    </source>
</reference>
<keyword id="KW-0021">Allosteric enzyme</keyword>
<keyword id="KW-0963">Cytoplasm</keyword>
<keyword id="KW-0378">Hydrolase</keyword>
<keyword id="KW-0479">Metal-binding</keyword>
<keyword id="KW-0645">Protease</keyword>
<keyword id="KW-1185">Reference proteome</keyword>
<keyword id="KW-0915">Sodium</keyword>
<keyword id="KW-0888">Threonine protease</keyword>
<organism>
    <name type="scientific">Albidiferax ferrireducens (strain ATCC BAA-621 / DSM 15236 / T118)</name>
    <name type="common">Rhodoferax ferrireducens</name>
    <dbReference type="NCBI Taxonomy" id="338969"/>
    <lineage>
        <taxon>Bacteria</taxon>
        <taxon>Pseudomonadati</taxon>
        <taxon>Pseudomonadota</taxon>
        <taxon>Betaproteobacteria</taxon>
        <taxon>Burkholderiales</taxon>
        <taxon>Comamonadaceae</taxon>
        <taxon>Rhodoferax</taxon>
    </lineage>
</organism>
<accession>Q21SV8</accession>
<name>HSLV_ALBFT</name>
<proteinExistence type="inferred from homology"/>
<gene>
    <name evidence="1" type="primary">hslV</name>
    <name type="ordered locus">Rfer_3436</name>
</gene>
<comment type="function">
    <text evidence="1">Protease subunit of a proteasome-like degradation complex believed to be a general protein degrading machinery.</text>
</comment>
<comment type="catalytic activity">
    <reaction evidence="1">
        <text>ATP-dependent cleavage of peptide bonds with broad specificity.</text>
        <dbReference type="EC" id="3.4.25.2"/>
    </reaction>
</comment>
<comment type="activity regulation">
    <text evidence="1">Allosterically activated by HslU binding.</text>
</comment>
<comment type="subunit">
    <text evidence="1">A double ring-shaped homohexamer of HslV is capped on each side by a ring-shaped HslU homohexamer. The assembly of the HslU/HslV complex is dependent on binding of ATP.</text>
</comment>
<comment type="subcellular location">
    <subcellularLocation>
        <location evidence="1">Cytoplasm</location>
    </subcellularLocation>
</comment>
<comment type="similarity">
    <text evidence="1">Belongs to the peptidase T1B family. HslV subfamily.</text>
</comment>
<evidence type="ECO:0000255" key="1">
    <source>
        <dbReference type="HAMAP-Rule" id="MF_00248"/>
    </source>
</evidence>
<dbReference type="EC" id="3.4.25.2" evidence="1"/>
<dbReference type="EMBL" id="CP000267">
    <property type="protein sequence ID" value="ABD71145.1"/>
    <property type="molecule type" value="Genomic_DNA"/>
</dbReference>
<dbReference type="RefSeq" id="WP_011465708.1">
    <property type="nucleotide sequence ID" value="NC_007908.1"/>
</dbReference>
<dbReference type="SMR" id="Q21SV8"/>
<dbReference type="STRING" id="338969.Rfer_3436"/>
<dbReference type="MEROPS" id="T01.007"/>
<dbReference type="KEGG" id="rfr:Rfer_3436"/>
<dbReference type="eggNOG" id="COG5405">
    <property type="taxonomic scope" value="Bacteria"/>
</dbReference>
<dbReference type="HOGENOM" id="CLU_093872_1_0_4"/>
<dbReference type="OrthoDB" id="9804884at2"/>
<dbReference type="Proteomes" id="UP000008332">
    <property type="component" value="Chromosome"/>
</dbReference>
<dbReference type="GO" id="GO:0009376">
    <property type="term" value="C:HslUV protease complex"/>
    <property type="evidence" value="ECO:0007669"/>
    <property type="project" value="UniProtKB-UniRule"/>
</dbReference>
<dbReference type="GO" id="GO:0005839">
    <property type="term" value="C:proteasome core complex"/>
    <property type="evidence" value="ECO:0007669"/>
    <property type="project" value="InterPro"/>
</dbReference>
<dbReference type="GO" id="GO:0046872">
    <property type="term" value="F:metal ion binding"/>
    <property type="evidence" value="ECO:0007669"/>
    <property type="project" value="UniProtKB-KW"/>
</dbReference>
<dbReference type="GO" id="GO:0004298">
    <property type="term" value="F:threonine-type endopeptidase activity"/>
    <property type="evidence" value="ECO:0007669"/>
    <property type="project" value="UniProtKB-KW"/>
</dbReference>
<dbReference type="GO" id="GO:0051603">
    <property type="term" value="P:proteolysis involved in protein catabolic process"/>
    <property type="evidence" value="ECO:0007669"/>
    <property type="project" value="InterPro"/>
</dbReference>
<dbReference type="CDD" id="cd01913">
    <property type="entry name" value="protease_HslV"/>
    <property type="match status" value="1"/>
</dbReference>
<dbReference type="FunFam" id="3.60.20.10:FF:000002">
    <property type="entry name" value="ATP-dependent protease subunit HslV"/>
    <property type="match status" value="1"/>
</dbReference>
<dbReference type="Gene3D" id="3.60.20.10">
    <property type="entry name" value="Glutamine Phosphoribosylpyrophosphate, subunit 1, domain 1"/>
    <property type="match status" value="1"/>
</dbReference>
<dbReference type="HAMAP" id="MF_00248">
    <property type="entry name" value="HslV"/>
    <property type="match status" value="1"/>
</dbReference>
<dbReference type="InterPro" id="IPR022281">
    <property type="entry name" value="ATP-dep_Prtase_HsIV_su"/>
</dbReference>
<dbReference type="InterPro" id="IPR029055">
    <property type="entry name" value="Ntn_hydrolases_N"/>
</dbReference>
<dbReference type="InterPro" id="IPR001353">
    <property type="entry name" value="Proteasome_sua/b"/>
</dbReference>
<dbReference type="InterPro" id="IPR023333">
    <property type="entry name" value="Proteasome_suB-type"/>
</dbReference>
<dbReference type="NCBIfam" id="TIGR03692">
    <property type="entry name" value="ATP_dep_HslV"/>
    <property type="match status" value="1"/>
</dbReference>
<dbReference type="NCBIfam" id="NF003964">
    <property type="entry name" value="PRK05456.1"/>
    <property type="match status" value="1"/>
</dbReference>
<dbReference type="PANTHER" id="PTHR32194:SF0">
    <property type="entry name" value="ATP-DEPENDENT PROTEASE SUBUNIT HSLV"/>
    <property type="match status" value="1"/>
</dbReference>
<dbReference type="PANTHER" id="PTHR32194">
    <property type="entry name" value="METALLOPROTEASE TLDD"/>
    <property type="match status" value="1"/>
</dbReference>
<dbReference type="Pfam" id="PF00227">
    <property type="entry name" value="Proteasome"/>
    <property type="match status" value="1"/>
</dbReference>
<dbReference type="PIRSF" id="PIRSF039093">
    <property type="entry name" value="HslV"/>
    <property type="match status" value="1"/>
</dbReference>
<dbReference type="SUPFAM" id="SSF56235">
    <property type="entry name" value="N-terminal nucleophile aminohydrolases (Ntn hydrolases)"/>
    <property type="match status" value="1"/>
</dbReference>
<dbReference type="PROSITE" id="PS51476">
    <property type="entry name" value="PROTEASOME_BETA_2"/>
    <property type="match status" value="1"/>
</dbReference>
<feature type="chain" id="PRO_1000012656" description="ATP-dependent protease subunit HslV">
    <location>
        <begin position="1"/>
        <end position="182"/>
    </location>
</feature>
<feature type="active site" evidence="1">
    <location>
        <position position="7"/>
    </location>
</feature>
<feature type="binding site" evidence="1">
    <location>
        <position position="166"/>
    </location>
    <ligand>
        <name>Na(+)</name>
        <dbReference type="ChEBI" id="CHEBI:29101"/>
    </ligand>
</feature>
<feature type="binding site" evidence="1">
    <location>
        <position position="169"/>
    </location>
    <ligand>
        <name>Na(+)</name>
        <dbReference type="ChEBI" id="CHEBI:29101"/>
    </ligand>
</feature>
<feature type="binding site" evidence="1">
    <location>
        <position position="172"/>
    </location>
    <ligand>
        <name>Na(+)</name>
        <dbReference type="ChEBI" id="CHEBI:29101"/>
    </ligand>
</feature>
<sequence>MEQFHGTTIISVRRKTPEGYSVAIGGDGQVTLGNIVVKGTARKVRKLYHGKVLAGFAGATADAFTLFERFEAKLEKHQGHLVRAAIELTKDWRTDRVLRRLEAMLAVADSEASLIITGNGDVLEPENGIVTIGSGGAYAQAAAMALLNHTEMSAPEIVKKSLEIAAEICIYTNMSHTIETLP</sequence>